<keyword id="KW-0997">Cell inner membrane</keyword>
<keyword id="KW-1003">Cell membrane</keyword>
<keyword id="KW-0472">Membrane</keyword>
<keyword id="KW-1185">Reference proteome</keyword>
<keyword id="KW-0812">Transmembrane</keyword>
<keyword id="KW-1133">Transmembrane helix</keyword>
<keyword id="KW-0813">Transport</keyword>
<feature type="chain" id="PRO_0000286750" description="Putative 2-aminoethylphosphonate transport system permease protein PhnV">
    <location>
        <begin position="1"/>
        <end position="265"/>
    </location>
</feature>
<feature type="transmembrane region" description="Helical" evidence="1">
    <location>
        <begin position="13"/>
        <end position="33"/>
    </location>
</feature>
<feature type="transmembrane region" description="Helical" evidence="1">
    <location>
        <begin position="69"/>
        <end position="89"/>
    </location>
</feature>
<feature type="transmembrane region" description="Helical" evidence="1">
    <location>
        <begin position="104"/>
        <end position="124"/>
    </location>
</feature>
<feature type="transmembrane region" description="Helical" evidence="1">
    <location>
        <begin position="131"/>
        <end position="151"/>
    </location>
</feature>
<feature type="transmembrane region" description="Helical" evidence="1">
    <location>
        <begin position="185"/>
        <end position="205"/>
    </location>
</feature>
<feature type="transmembrane region" description="Helical" evidence="1">
    <location>
        <begin position="233"/>
        <end position="253"/>
    </location>
</feature>
<feature type="domain" description="ABC transmembrane type-1" evidence="1">
    <location>
        <begin position="65"/>
        <end position="253"/>
    </location>
</feature>
<reference key="1">
    <citation type="submission" date="1996-09" db="EMBL/GenBank/DDBJ databases">
        <title>Molecular genetic analysis of the Salmonella typhimurium LT2 phnXWRSTUV locus required for 2-aminoethylphosphonate transport and metabolism.</title>
        <authorList>
            <person name="Metcalf W.W."/>
            <person name="Jiang W."/>
            <person name="Wanner B.L."/>
        </authorList>
    </citation>
    <scope>NUCLEOTIDE SEQUENCE [GENOMIC DNA]</scope>
    <source>
        <strain>LT2</strain>
    </source>
</reference>
<reference key="2">
    <citation type="journal article" date="2001" name="Nature">
        <title>Complete genome sequence of Salmonella enterica serovar Typhimurium LT2.</title>
        <authorList>
            <person name="McClelland M."/>
            <person name="Sanderson K.E."/>
            <person name="Spieth J."/>
            <person name="Clifton S.W."/>
            <person name="Latreille P."/>
            <person name="Courtney L."/>
            <person name="Porwollik S."/>
            <person name="Ali J."/>
            <person name="Dante M."/>
            <person name="Du F."/>
            <person name="Hou S."/>
            <person name="Layman D."/>
            <person name="Leonard S."/>
            <person name="Nguyen C."/>
            <person name="Scott K."/>
            <person name="Holmes A."/>
            <person name="Grewal N."/>
            <person name="Mulvaney E."/>
            <person name="Ryan E."/>
            <person name="Sun H."/>
            <person name="Florea L."/>
            <person name="Miller W."/>
            <person name="Stoneking T."/>
            <person name="Nhan M."/>
            <person name="Waterston R."/>
            <person name="Wilson R.K."/>
        </authorList>
    </citation>
    <scope>NUCLEOTIDE SEQUENCE [LARGE SCALE GENOMIC DNA]</scope>
    <source>
        <strain>LT2 / SGSC1412 / ATCC 700720</strain>
    </source>
</reference>
<reference key="3">
    <citation type="journal article" date="1995" name="J. Bacteriol.">
        <title>Molecular cloning, mapping, and regulation of Pho regulon genes for phosphonate breakdown by the phosphonatase pathway of Salmonella typhimurium LT2.</title>
        <authorList>
            <person name="Jiang W."/>
            <person name="Metcalf W.W."/>
            <person name="Lee K.-S."/>
            <person name="Wanner B.L."/>
        </authorList>
    </citation>
    <scope>CLONING</scope>
    <scope>INDUCTION</scope>
    <source>
        <strain>LT2</strain>
    </source>
</reference>
<sequence length="265" mass="28470">MLIWSPKGRAAAGVVASVLFIVFFFLPLAVILMSSLSQQWNGILPSGFTLNHFVNALHGAAWDALLASLTIGFCASLFALLCGVWAALALRQYGVKTQKWLSMVFYLPSAIPSVSVGLGILVAFSQGPLQMNGTLWIVLTAHFVLISAFTFSNVSTGLARISADIENVASSLGASPWYRLRHVTLPLLMPWMMSALALSLSLSMGELGATMMIYPPGWTTLPVAIFSLTDRGNIADGAALTIVLVAITLLLMMKLERIAKRLGQK</sequence>
<accession>P96065</accession>
<accession>Q7CR34</accession>
<dbReference type="EMBL" id="U69493">
    <property type="protein sequence ID" value="AAB39647.1"/>
    <property type="molecule type" value="Genomic_DNA"/>
</dbReference>
<dbReference type="EMBL" id="AE006468">
    <property type="protein sequence ID" value="AAL19380.1"/>
    <property type="molecule type" value="Genomic_DNA"/>
</dbReference>
<dbReference type="PIR" id="T46952">
    <property type="entry name" value="T46952"/>
</dbReference>
<dbReference type="RefSeq" id="NP_459421.1">
    <property type="nucleotide sequence ID" value="NC_003197.2"/>
</dbReference>
<dbReference type="RefSeq" id="WP_000909791.1">
    <property type="nucleotide sequence ID" value="NC_003197.2"/>
</dbReference>
<dbReference type="SMR" id="P96065"/>
<dbReference type="STRING" id="99287.STM0426"/>
<dbReference type="TCDB" id="3.A.1.11.5">
    <property type="family name" value="the atp-binding cassette (abc) superfamily"/>
</dbReference>
<dbReference type="PaxDb" id="99287-STM0426"/>
<dbReference type="GeneID" id="1251945"/>
<dbReference type="KEGG" id="stm:STM0426"/>
<dbReference type="PATRIC" id="fig|99287.12.peg.455"/>
<dbReference type="HOGENOM" id="CLU_016047_3_2_6"/>
<dbReference type="OMA" id="LGGTKWI"/>
<dbReference type="PhylomeDB" id="P96065"/>
<dbReference type="BioCyc" id="SENT99287:STM0426-MONOMER"/>
<dbReference type="Proteomes" id="UP000001014">
    <property type="component" value="Chromosome"/>
</dbReference>
<dbReference type="GO" id="GO:0005886">
    <property type="term" value="C:plasma membrane"/>
    <property type="evidence" value="ECO:0000318"/>
    <property type="project" value="GO_Central"/>
</dbReference>
<dbReference type="GO" id="GO:0055085">
    <property type="term" value="P:transmembrane transport"/>
    <property type="evidence" value="ECO:0007669"/>
    <property type="project" value="InterPro"/>
</dbReference>
<dbReference type="CDD" id="cd06261">
    <property type="entry name" value="TM_PBP2"/>
    <property type="match status" value="1"/>
</dbReference>
<dbReference type="FunFam" id="1.10.3720.10:FF:000081">
    <property type="entry name" value="2-aminoethylphosphonate ABC transport system, membrane component PhnV"/>
    <property type="match status" value="1"/>
</dbReference>
<dbReference type="Gene3D" id="1.10.3720.10">
    <property type="entry name" value="MetI-like"/>
    <property type="match status" value="1"/>
</dbReference>
<dbReference type="InterPro" id="IPR017661">
    <property type="entry name" value="AminoethylPonate_ABC_PhnV"/>
</dbReference>
<dbReference type="InterPro" id="IPR000515">
    <property type="entry name" value="MetI-like"/>
</dbReference>
<dbReference type="InterPro" id="IPR035906">
    <property type="entry name" value="MetI-like_sf"/>
</dbReference>
<dbReference type="NCBIfam" id="TIGR03255">
    <property type="entry name" value="PhnV"/>
    <property type="match status" value="1"/>
</dbReference>
<dbReference type="PANTHER" id="PTHR43357">
    <property type="entry name" value="INNER MEMBRANE ABC TRANSPORTER PERMEASE PROTEIN YDCV"/>
    <property type="match status" value="1"/>
</dbReference>
<dbReference type="PANTHER" id="PTHR43357:SF4">
    <property type="entry name" value="INNER MEMBRANE ABC TRANSPORTER PERMEASE PROTEIN YDCV"/>
    <property type="match status" value="1"/>
</dbReference>
<dbReference type="Pfam" id="PF00528">
    <property type="entry name" value="BPD_transp_1"/>
    <property type="match status" value="1"/>
</dbReference>
<dbReference type="SUPFAM" id="SSF161098">
    <property type="entry name" value="MetI-like"/>
    <property type="match status" value="1"/>
</dbReference>
<dbReference type="PROSITE" id="PS50928">
    <property type="entry name" value="ABC_TM1"/>
    <property type="match status" value="1"/>
</dbReference>
<protein>
    <recommendedName>
        <fullName>Putative 2-aminoethylphosphonate transport system permease protein PhnV</fullName>
    </recommendedName>
</protein>
<name>PHNV_SALTY</name>
<organism>
    <name type="scientific">Salmonella typhimurium (strain LT2 / SGSC1412 / ATCC 700720)</name>
    <dbReference type="NCBI Taxonomy" id="99287"/>
    <lineage>
        <taxon>Bacteria</taxon>
        <taxon>Pseudomonadati</taxon>
        <taxon>Pseudomonadota</taxon>
        <taxon>Gammaproteobacteria</taxon>
        <taxon>Enterobacterales</taxon>
        <taxon>Enterobacteriaceae</taxon>
        <taxon>Salmonella</taxon>
    </lineage>
</organism>
<proteinExistence type="evidence at transcript level"/>
<evidence type="ECO:0000255" key="1">
    <source>
        <dbReference type="PROSITE-ProRule" id="PRU00441"/>
    </source>
</evidence>
<evidence type="ECO:0000269" key="2">
    <source>
    </source>
</evidence>
<evidence type="ECO:0000305" key="3"/>
<comment type="function">
    <text>Probably part of the PhnSTUV complex (TC 3.A.1.11.5) involved in 2-aminoethylphosphonate import. Probably responsible for the translocation of the substrate across the membrane.</text>
</comment>
<comment type="subcellular location">
    <subcellularLocation>
        <location evidence="3">Cell inner membrane</location>
        <topology evidence="1">Multi-pass membrane protein</topology>
    </subcellularLocation>
</comment>
<comment type="induction">
    <text evidence="2">Induced when inorganic phosphate is limiting; this is controlled by PhoB.</text>
</comment>
<comment type="miscellaneous">
    <text>Maps to a phosphate-starvation-inducible locus previously known as psiC.</text>
</comment>
<comment type="similarity">
    <text evidence="3">Belongs to the binding-protein-dependent transport system permease family.</text>
</comment>
<gene>
    <name type="primary">phnV</name>
    <name type="ordered locus">STM0426</name>
</gene>